<keyword id="KW-0119">Carbohydrate metabolism</keyword>
<keyword id="KW-0136">Cellulose degradation</keyword>
<keyword id="KW-0186">Copper</keyword>
<keyword id="KW-1015">Disulfide bond</keyword>
<keyword id="KW-0325">Glycoprotein</keyword>
<keyword id="KW-0479">Metal-binding</keyword>
<keyword id="KW-0503">Monooxygenase</keyword>
<keyword id="KW-0560">Oxidoreductase</keyword>
<keyword id="KW-0624">Polysaccharide degradation</keyword>
<keyword id="KW-1185">Reference proteome</keyword>
<keyword id="KW-0964">Secreted</keyword>
<keyword id="KW-0732">Signal</keyword>
<gene>
    <name type="primary">LPMO9B</name>
    <name evidence="9" type="synonym">GH61B</name>
    <name type="ORF">PODANS_7_3160</name>
</gene>
<feature type="signal peptide" evidence="4">
    <location>
        <begin position="1"/>
        <end position="19"/>
    </location>
</feature>
<feature type="chain" id="PRO_5007639149" description="AA9 family lytic polysaccharide monooxygenase B">
    <location>
        <begin position="20"/>
        <end position="327"/>
    </location>
</feature>
<feature type="domain" description="CBM1" evidence="6">
    <location>
        <begin position="291"/>
        <end position="327"/>
    </location>
</feature>
<feature type="region of interest" description="Disordered" evidence="7">
    <location>
        <begin position="264"/>
        <end position="284"/>
    </location>
</feature>
<feature type="compositionally biased region" description="Low complexity" evidence="7">
    <location>
        <begin position="264"/>
        <end position="280"/>
    </location>
</feature>
<feature type="binding site" evidence="2">
    <location>
        <position position="20"/>
    </location>
    <ligand>
        <name>Cu(2+)</name>
        <dbReference type="ChEBI" id="CHEBI:29036"/>
        <note>catalytic</note>
    </ligand>
</feature>
<feature type="binding site" evidence="2">
    <location>
        <position position="98"/>
    </location>
    <ligand>
        <name>Cu(2+)</name>
        <dbReference type="ChEBI" id="CHEBI:29036"/>
        <note>catalytic</note>
    </ligand>
</feature>
<feature type="binding site" evidence="2">
    <location>
        <position position="178"/>
    </location>
    <ligand>
        <name>O2</name>
        <dbReference type="ChEBI" id="CHEBI:15379"/>
    </ligand>
</feature>
<feature type="binding site" evidence="2">
    <location>
        <position position="187"/>
    </location>
    <ligand>
        <name>O2</name>
        <dbReference type="ChEBI" id="CHEBI:15379"/>
    </ligand>
</feature>
<feature type="binding site" evidence="2">
    <location>
        <position position="189"/>
    </location>
    <ligand>
        <name>Cu(2+)</name>
        <dbReference type="ChEBI" id="CHEBI:29036"/>
        <note>catalytic</note>
    </ligand>
</feature>
<feature type="glycosylation site" description="N-linked (GlcNAc...) asparagine" evidence="5">
    <location>
        <position position="317"/>
    </location>
</feature>
<feature type="disulfide bond" evidence="3">
    <location>
        <begin position="68"/>
        <end position="192"/>
    </location>
</feature>
<proteinExistence type="evidence at protein level"/>
<sequence>MKSFTATALAALLAQQAAAHSTFQQLWVDGTDFGSQCARLPQSNSPITNYNSNDMRCNIIGTRPQVKCPVRAGGTVTVEMHAQNGDRSCSQEAIGGAHHGPVSVYLTKVSDALTADGSTGWFKIFDDGWRKNPSGRVGDDDFWGTKDLNACCGKMNVKIPSDIPSGDYLLRAEAIALHAAGGAGGAQPYMTCYQITVSGGGSASPPTVSIPGHFKASDPGVQVNIHGAMTNYVIPGPAVYAGGSTKVAGSACSGCEATCAVGSSPTTSLTPPVSTSTPAPGNGGGGSPGGCTVQKYGQCGGQGYTGCTTCAAGSTCNTTNQWYHQCV</sequence>
<dbReference type="EC" id="1.14.99.56" evidence="8"/>
<dbReference type="EMBL" id="CU633900">
    <property type="protein sequence ID" value="CAP68375.1"/>
    <property type="molecule type" value="Genomic_DNA"/>
</dbReference>
<dbReference type="EMBL" id="FO904942">
    <property type="protein sequence ID" value="CDP31846.1"/>
    <property type="molecule type" value="Genomic_DNA"/>
</dbReference>
<dbReference type="RefSeq" id="XP_001907702.1">
    <property type="nucleotide sequence ID" value="XM_001907667.1"/>
</dbReference>
<dbReference type="SMR" id="B2AVF1"/>
<dbReference type="STRING" id="515849.B2AVF1"/>
<dbReference type="CAZy" id="AA9">
    <property type="family name" value="Auxiliary Activities 9"/>
</dbReference>
<dbReference type="CAZy" id="CBM1">
    <property type="family name" value="Carbohydrate-Binding Module Family 1"/>
</dbReference>
<dbReference type="GeneID" id="6192283"/>
<dbReference type="KEGG" id="pan:PODANSg4737"/>
<dbReference type="VEuPathDB" id="FungiDB:PODANS_7_3160"/>
<dbReference type="eggNOG" id="ENOG502QRTW">
    <property type="taxonomic scope" value="Eukaryota"/>
</dbReference>
<dbReference type="HOGENOM" id="CLU_031730_0_1_1"/>
<dbReference type="OrthoDB" id="3238762at2759"/>
<dbReference type="BRENDA" id="1.14.99.54">
    <property type="organism ID" value="4930"/>
</dbReference>
<dbReference type="Proteomes" id="UP000001197">
    <property type="component" value="Chromosome 7"/>
</dbReference>
<dbReference type="GO" id="GO:0005576">
    <property type="term" value="C:extracellular region"/>
    <property type="evidence" value="ECO:0007669"/>
    <property type="project" value="UniProtKB-SubCell"/>
</dbReference>
<dbReference type="GO" id="GO:0030248">
    <property type="term" value="F:cellulose binding"/>
    <property type="evidence" value="ECO:0007669"/>
    <property type="project" value="InterPro"/>
</dbReference>
<dbReference type="GO" id="GO:0046872">
    <property type="term" value="F:metal ion binding"/>
    <property type="evidence" value="ECO:0007669"/>
    <property type="project" value="UniProtKB-KW"/>
</dbReference>
<dbReference type="GO" id="GO:0004497">
    <property type="term" value="F:monooxygenase activity"/>
    <property type="evidence" value="ECO:0007669"/>
    <property type="project" value="UniProtKB-KW"/>
</dbReference>
<dbReference type="GO" id="GO:0030245">
    <property type="term" value="P:cellulose catabolic process"/>
    <property type="evidence" value="ECO:0007669"/>
    <property type="project" value="UniProtKB-KW"/>
</dbReference>
<dbReference type="CDD" id="cd21175">
    <property type="entry name" value="LPMO_AA9"/>
    <property type="match status" value="1"/>
</dbReference>
<dbReference type="Gene3D" id="2.70.50.70">
    <property type="match status" value="1"/>
</dbReference>
<dbReference type="InterPro" id="IPR049892">
    <property type="entry name" value="AA9"/>
</dbReference>
<dbReference type="InterPro" id="IPR005103">
    <property type="entry name" value="AA9_LPMO"/>
</dbReference>
<dbReference type="InterPro" id="IPR035971">
    <property type="entry name" value="CBD_sf"/>
</dbReference>
<dbReference type="InterPro" id="IPR000254">
    <property type="entry name" value="Cellulose-bd_dom_fun"/>
</dbReference>
<dbReference type="PANTHER" id="PTHR33353:SF9">
    <property type="entry name" value="ENDOGLUCANASE II"/>
    <property type="match status" value="1"/>
</dbReference>
<dbReference type="PANTHER" id="PTHR33353">
    <property type="entry name" value="PUTATIVE (AFU_ORTHOLOGUE AFUA_1G12560)-RELATED"/>
    <property type="match status" value="1"/>
</dbReference>
<dbReference type="Pfam" id="PF03443">
    <property type="entry name" value="AA9"/>
    <property type="match status" value="1"/>
</dbReference>
<dbReference type="Pfam" id="PF00734">
    <property type="entry name" value="CBM_1"/>
    <property type="match status" value="1"/>
</dbReference>
<dbReference type="SMART" id="SM00236">
    <property type="entry name" value="fCBD"/>
    <property type="match status" value="1"/>
</dbReference>
<dbReference type="SUPFAM" id="SSF57180">
    <property type="entry name" value="Cellulose-binding domain"/>
    <property type="match status" value="1"/>
</dbReference>
<dbReference type="PROSITE" id="PS00562">
    <property type="entry name" value="CBM1_1"/>
    <property type="match status" value="1"/>
</dbReference>
<dbReference type="PROSITE" id="PS51164">
    <property type="entry name" value="CBM1_2"/>
    <property type="match status" value="1"/>
</dbReference>
<name>LP9B_PODAN</name>
<comment type="function">
    <text evidence="8 11">Lytic polysaccharide monooxygenase (LPMO) that depolymerizes crystalline and amorphous polysaccharides via the oxidation of scissile alpha- or beta-(1-4)-glycosidic bonds, yielding C1 or C4 oxidation products (PubMed:23124232). Catalysis by LPMOs requires the reduction of the active-site copper from Cu(II) to Cu(I) by a reducing agent and H(2)O(2) or O(2) as a cosubstrate (Probable).</text>
</comment>
<comment type="catalytic activity">
    <reaction evidence="8">
        <text>[(1-&gt;4)-beta-D-glucosyl]n+m + reduced acceptor + O2 = 4-dehydro-beta-D-glucosyl-[(1-&gt;4)-beta-D-glucosyl]n-1 + [(1-&gt;4)-beta-D-glucosyl]m + acceptor + H2O.</text>
        <dbReference type="EC" id="1.14.99.56"/>
    </reaction>
</comment>
<comment type="cofactor">
    <cofactor evidence="2">
        <name>Cu(2+)</name>
        <dbReference type="ChEBI" id="CHEBI:29036"/>
    </cofactor>
    <text evidence="2">Binds 1 copper ion per subunit.</text>
</comment>
<comment type="subcellular location">
    <subcellularLocation>
        <location evidence="11">Secreted</location>
    </subcellularLocation>
</comment>
<comment type="domain">
    <text evidence="1">Has a modular structure: an endo-beta-1,4-glucanase catalytic module at the N-terminus, a linker rich in serines and threonines, and a C-terminal carbohydrate-binding module (CBM). The CBM domain is essential for binding to and subsequent oxidative degradation of polysaccharide substrate.</text>
</comment>
<comment type="biotechnology">
    <text evidence="8">Lignocellulose is the most abundant polymeric composite on Earth and is a recalcitrant but promising renewable substrate for industrial biotechnology applications. Together with cellobiose dehydrogenases (CDHs) an enzymatic system capable of oxidative cellulose cleavage is formed, which increases the efficiency of cellulases and put LPMOs at focus of biofuel research.</text>
</comment>
<comment type="similarity">
    <text evidence="10">Belongs to the polysaccharide monooxygenase AA9 family.</text>
</comment>
<accession>B2AVF1</accession>
<reference key="1">
    <citation type="journal article" date="2008" name="Genome Biol.">
        <title>The genome sequence of the model ascomycete fungus Podospora anserina.</title>
        <authorList>
            <person name="Espagne E."/>
            <person name="Lespinet O."/>
            <person name="Malagnac F."/>
            <person name="Da Silva C."/>
            <person name="Jaillon O."/>
            <person name="Porcel B.M."/>
            <person name="Couloux A."/>
            <person name="Aury J.-M."/>
            <person name="Segurens B."/>
            <person name="Poulain J."/>
            <person name="Anthouard V."/>
            <person name="Grossetete S."/>
            <person name="Khalili H."/>
            <person name="Coppin E."/>
            <person name="Dequard-Chablat M."/>
            <person name="Picard M."/>
            <person name="Contamine V."/>
            <person name="Arnaise S."/>
            <person name="Bourdais A."/>
            <person name="Berteaux-Lecellier V."/>
            <person name="Gautheret D."/>
            <person name="de Vries R.P."/>
            <person name="Battaglia E."/>
            <person name="Coutinho P.M."/>
            <person name="Danchin E.G.J."/>
            <person name="Henrissat B."/>
            <person name="El Khoury R."/>
            <person name="Sainsard-Chanet A."/>
            <person name="Boivin A."/>
            <person name="Pinan-Lucarre B."/>
            <person name="Sellem C.H."/>
            <person name="Debuchy R."/>
            <person name="Wincker P."/>
            <person name="Weissenbach J."/>
            <person name="Silar P."/>
        </authorList>
    </citation>
    <scope>NUCLEOTIDE SEQUENCE [LARGE SCALE GENOMIC DNA]</scope>
    <source>
        <strain>S / ATCC MYA-4624 / DSM 980 / FGSC 10383</strain>
    </source>
</reference>
<reference key="2">
    <citation type="journal article" date="2014" name="Genetics">
        <title>Maintaining two mating types: Structure of the mating type locus and its role in heterokaryosis in Podospora anserina.</title>
        <authorList>
            <person name="Grognet P."/>
            <person name="Bidard F."/>
            <person name="Kuchly C."/>
            <person name="Tong L.C.H."/>
            <person name="Coppin E."/>
            <person name="Benkhali J.A."/>
            <person name="Couloux A."/>
            <person name="Wincker P."/>
            <person name="Debuchy R."/>
            <person name="Silar P."/>
        </authorList>
    </citation>
    <scope>GENOME REANNOTATION</scope>
    <source>
        <strain>S / ATCC MYA-4624 / DSM 980 / FGSC 10383</strain>
    </source>
</reference>
<reference key="3">
    <citation type="journal article" date="2013" name="Appl. Environ. Microbiol.">
        <title>Cello-oligosaccharide oxidation reveals differences between two lytic polysaccharide monooxygenases (family GH61) from Podospora anserina.</title>
        <authorList>
            <person name="Bey M."/>
            <person name="Zhou S."/>
            <person name="Poidevin L."/>
            <person name="Henrissat B."/>
            <person name="Coutinho P.M."/>
            <person name="Berrin J.G."/>
            <person name="Sigoillot J.C."/>
        </authorList>
    </citation>
    <scope>FUNCTION</scope>
    <scope>CATALYTIC ACTIVITY</scope>
    <scope>BIOTECHNOLOGY</scope>
</reference>
<evidence type="ECO:0000250" key="1">
    <source>
        <dbReference type="UniProtKB" id="B2B629"/>
    </source>
</evidence>
<evidence type="ECO:0000250" key="2">
    <source>
        <dbReference type="UniProtKB" id="Q1K8B6"/>
    </source>
</evidence>
<evidence type="ECO:0000250" key="3">
    <source>
        <dbReference type="UniProtKB" id="Q4WP32"/>
    </source>
</evidence>
<evidence type="ECO:0000255" key="4"/>
<evidence type="ECO:0000255" key="5">
    <source>
        <dbReference type="PROSITE-ProRule" id="PRU00498"/>
    </source>
</evidence>
<evidence type="ECO:0000255" key="6">
    <source>
        <dbReference type="PROSITE-ProRule" id="PRU00597"/>
    </source>
</evidence>
<evidence type="ECO:0000256" key="7">
    <source>
        <dbReference type="SAM" id="MobiDB-lite"/>
    </source>
</evidence>
<evidence type="ECO:0000269" key="8">
    <source>
    </source>
</evidence>
<evidence type="ECO:0000303" key="9">
    <source>
    </source>
</evidence>
<evidence type="ECO:0000305" key="10"/>
<evidence type="ECO:0000305" key="11">
    <source>
    </source>
</evidence>
<protein>
    <recommendedName>
        <fullName evidence="9">AA9 family lytic polysaccharide monooxygenase B</fullName>
        <shortName evidence="9">LPMO9B</shortName>
        <ecNumber evidence="8">1.14.99.56</ecNumber>
    </recommendedName>
    <alternativeName>
        <fullName evidence="10">Cellulase LPMO9B</fullName>
    </alternativeName>
    <alternativeName>
        <fullName evidence="10">Endo-beta-1,4-glucanase LPMO9B</fullName>
        <shortName evidence="10">Endoglucanase LPMO9B</shortName>
    </alternativeName>
    <alternativeName>
        <fullName evidence="10">Glycosyl hydrolase 61 family protein LPMO9B</fullName>
    </alternativeName>
</protein>
<organism>
    <name type="scientific">Podospora anserina (strain S / ATCC MYA-4624 / DSM 980 / FGSC 10383)</name>
    <name type="common">Pleurage anserina</name>
    <dbReference type="NCBI Taxonomy" id="515849"/>
    <lineage>
        <taxon>Eukaryota</taxon>
        <taxon>Fungi</taxon>
        <taxon>Dikarya</taxon>
        <taxon>Ascomycota</taxon>
        <taxon>Pezizomycotina</taxon>
        <taxon>Sordariomycetes</taxon>
        <taxon>Sordariomycetidae</taxon>
        <taxon>Sordariales</taxon>
        <taxon>Podosporaceae</taxon>
        <taxon>Podospora</taxon>
        <taxon>Podospora anserina</taxon>
    </lineage>
</organism>